<organism>
    <name type="scientific">Staphylococcus aureus</name>
    <dbReference type="NCBI Taxonomy" id="1280"/>
    <lineage>
        <taxon>Bacteria</taxon>
        <taxon>Bacillati</taxon>
        <taxon>Bacillota</taxon>
        <taxon>Bacilli</taxon>
        <taxon>Bacillales</taxon>
        <taxon>Staphylococcaceae</taxon>
        <taxon>Staphylococcus</taxon>
    </lineage>
</organism>
<keyword id="KW-0002">3D-structure</keyword>
<keyword id="KW-0227">DNA damage</keyword>
<keyword id="KW-0234">DNA repair</keyword>
<keyword id="KW-0235">DNA replication</keyword>
<keyword id="KW-0436">Ligase</keyword>
<keyword id="KW-0460">Magnesium</keyword>
<keyword id="KW-0464">Manganese</keyword>
<keyword id="KW-0479">Metal-binding</keyword>
<keyword id="KW-0520">NAD</keyword>
<keyword id="KW-0862">Zinc</keyword>
<gene>
    <name evidence="1" type="primary">ligA</name>
    <name type="synonym">lig</name>
</gene>
<accession>Q9AIU7</accession>
<feature type="chain" id="PRO_0000161762" description="DNA ligase">
    <location>
        <begin position="1"/>
        <end position="667"/>
    </location>
</feature>
<feature type="domain" description="BRCT" evidence="1">
    <location>
        <begin position="586"/>
        <end position="667"/>
    </location>
</feature>
<feature type="active site" description="N6-AMP-lysine intermediate" evidence="1">
    <location>
        <position position="112"/>
    </location>
</feature>
<feature type="binding site" evidence="1">
    <location>
        <begin position="32"/>
        <end position="36"/>
    </location>
    <ligand>
        <name>NAD(+)</name>
        <dbReference type="ChEBI" id="CHEBI:57540"/>
    </ligand>
</feature>
<feature type="binding site" evidence="1">
    <location>
        <begin position="81"/>
        <end position="82"/>
    </location>
    <ligand>
        <name>NAD(+)</name>
        <dbReference type="ChEBI" id="CHEBI:57540"/>
    </ligand>
</feature>
<feature type="binding site" evidence="1">
    <location>
        <position position="110"/>
    </location>
    <ligand>
        <name>NAD(+)</name>
        <dbReference type="ChEBI" id="CHEBI:57540"/>
    </ligand>
</feature>
<feature type="binding site" evidence="1">
    <location>
        <position position="133"/>
    </location>
    <ligand>
        <name>NAD(+)</name>
        <dbReference type="ChEBI" id="CHEBI:57540"/>
    </ligand>
</feature>
<feature type="binding site" evidence="1">
    <location>
        <position position="167"/>
    </location>
    <ligand>
        <name>NAD(+)</name>
        <dbReference type="ChEBI" id="CHEBI:57540"/>
    </ligand>
</feature>
<feature type="binding site" evidence="1">
    <location>
        <position position="283"/>
    </location>
    <ligand>
        <name>NAD(+)</name>
        <dbReference type="ChEBI" id="CHEBI:57540"/>
    </ligand>
</feature>
<feature type="binding site" evidence="1">
    <location>
        <position position="307"/>
    </location>
    <ligand>
        <name>NAD(+)</name>
        <dbReference type="ChEBI" id="CHEBI:57540"/>
    </ligand>
</feature>
<feature type="binding site" evidence="1">
    <location>
        <position position="401"/>
    </location>
    <ligand>
        <name>Zn(2+)</name>
        <dbReference type="ChEBI" id="CHEBI:29105"/>
    </ligand>
</feature>
<feature type="binding site" evidence="1">
    <location>
        <position position="404"/>
    </location>
    <ligand>
        <name>Zn(2+)</name>
        <dbReference type="ChEBI" id="CHEBI:29105"/>
    </ligand>
</feature>
<feature type="binding site" evidence="1">
    <location>
        <position position="419"/>
    </location>
    <ligand>
        <name>Zn(2+)</name>
        <dbReference type="ChEBI" id="CHEBI:29105"/>
    </ligand>
</feature>
<feature type="binding site" evidence="1">
    <location>
        <position position="424"/>
    </location>
    <ligand>
        <name>Zn(2+)</name>
        <dbReference type="ChEBI" id="CHEBI:29105"/>
    </ligand>
</feature>
<feature type="helix" evidence="2">
    <location>
        <begin position="5"/>
        <end position="23"/>
    </location>
</feature>
<feature type="helix" evidence="2">
    <location>
        <begin position="32"/>
        <end position="48"/>
    </location>
</feature>
<feature type="helix" evidence="2">
    <location>
        <begin position="50"/>
        <end position="52"/>
    </location>
</feature>
<feature type="helix" evidence="2">
    <location>
        <begin position="58"/>
        <end position="62"/>
    </location>
</feature>
<feature type="strand" evidence="2">
    <location>
        <begin position="72"/>
        <end position="74"/>
    </location>
</feature>
<feature type="strand" evidence="2">
    <location>
        <begin position="83"/>
        <end position="85"/>
    </location>
</feature>
<feature type="helix" evidence="2">
    <location>
        <begin position="88"/>
        <end position="101"/>
    </location>
</feature>
<feature type="strand" evidence="2">
    <location>
        <begin position="107"/>
        <end position="113"/>
    </location>
</feature>
<feature type="strand" evidence="2">
    <location>
        <begin position="115"/>
        <end position="123"/>
    </location>
</feature>
<feature type="strand" evidence="2">
    <location>
        <begin position="126"/>
        <end position="132"/>
    </location>
</feature>
<feature type="strand" evidence="2">
    <location>
        <begin position="136"/>
        <end position="141"/>
    </location>
</feature>
<feature type="helix" evidence="2">
    <location>
        <begin position="143"/>
        <end position="146"/>
    </location>
</feature>
<feature type="strand" evidence="2">
    <location>
        <begin position="162"/>
        <end position="169"/>
    </location>
</feature>
<feature type="helix" evidence="2">
    <location>
        <begin position="172"/>
        <end position="182"/>
    </location>
</feature>
<feature type="turn" evidence="2">
    <location>
        <begin position="183"/>
        <end position="186"/>
    </location>
</feature>
<feature type="helix" evidence="2">
    <location>
        <begin position="193"/>
        <end position="201"/>
    </location>
</feature>
<feature type="helix" evidence="2">
    <location>
        <begin position="206"/>
        <end position="211"/>
    </location>
</feature>
<feature type="strand" evidence="2">
    <location>
        <begin position="215"/>
        <end position="222"/>
    </location>
</feature>
<feature type="helix" evidence="2">
    <location>
        <begin position="232"/>
        <end position="242"/>
    </location>
</feature>
<feature type="strand" evidence="2">
    <location>
        <begin position="251"/>
        <end position="255"/>
    </location>
</feature>
<feature type="helix" evidence="2">
    <location>
        <begin position="256"/>
        <end position="269"/>
    </location>
</feature>
<feature type="helix" evidence="2">
    <location>
        <begin position="270"/>
        <end position="272"/>
    </location>
</feature>
<feature type="strand" evidence="2">
    <location>
        <begin position="273"/>
        <end position="275"/>
    </location>
</feature>
<feature type="strand" evidence="2">
    <location>
        <begin position="277"/>
        <end position="286"/>
    </location>
</feature>
<feature type="helix" evidence="2">
    <location>
        <begin position="287"/>
        <end position="293"/>
    </location>
</feature>
<feature type="strand" evidence="2">
    <location>
        <begin position="297"/>
        <end position="300"/>
    </location>
</feature>
<feature type="strand" evidence="2">
    <location>
        <begin position="303"/>
        <end position="307"/>
    </location>
</feature>
<reference key="1">
    <citation type="journal article" date="2001" name="J. Bacteriol.">
        <title>Cloning and functional characterization of an NAD(+)-dependent DNA ligase from Staphylococcus aureus.</title>
        <authorList>
            <person name="Kaczmarek F.S."/>
            <person name="Zaniewski R.P."/>
            <person name="Gootz T.D."/>
            <person name="Danley D.E."/>
            <person name="Mansour M.N."/>
            <person name="Griffor M."/>
            <person name="Kamath A.V."/>
            <person name="Cronan M."/>
            <person name="Mueller J."/>
            <person name="Sun D."/>
            <person name="Martin P.K."/>
            <person name="Benton B."/>
            <person name="McDowell L."/>
            <person name="Biek D."/>
            <person name="Schmid M.B."/>
        </authorList>
    </citation>
    <scope>NUCLEOTIDE SEQUENCE [GENOMIC DNA]</scope>
    <scope>CHARACTERIZATION</scope>
    <source>
        <strain>NT64</strain>
    </source>
</reference>
<protein>
    <recommendedName>
        <fullName evidence="1">DNA ligase</fullName>
        <ecNumber evidence="1">6.5.1.2</ecNumber>
    </recommendedName>
    <alternativeName>
        <fullName evidence="1">Polydeoxyribonucleotide synthase [NAD(+)]</fullName>
    </alternativeName>
</protein>
<sequence>MADLSSRVNELHDLLNQYSYEYYVEDNPSVPDSEYDKLLHELIKIEEEHPEYKTVDSPTVRVGGEAQASFNKVNHDTPMLSLGNAFNEDDLRKFDQRIREQIGNVEYMCELKIDGLAVSLKYVDGYFVQGLTRGDGTTGEDITENLKTIHAIPLKMKEPLNVEVRGEAYMPRRSFLRLNEEKEKNDEQLFANPRNAAAGSLRQLDSKLTAKRKLSVFIYSVNDFTDFNARSQSEALDELDKLGFTTNKNRARVNNIDGVLEYIEKWTSQRESLPYDIDGIVIKVNDLDQQDEMGFTQKSPRWAIAYKFPAEEVVTKLLDIELSIGRTGVVTPTAILEPVKVAGTTVSRASLHNEDLIHDRDIRIGDSVVVKKAGDIIPEVVRSIPERRPEDAVTYHMPTHCPSCGHELVRIEGEVALRCINPKCQAQLVEGLIHFVSRQAMNIDGLGTKIIQQLYQSELIKDVADIFYLTEEDLLPLDRMGQKKVDNLLAAIQQAKDNSLENLLFGLGIRHLGVKASQVLAEKYETIDRLLTVTEAELVEIHDIGDKVAQSVVTYLENEDIRALIQKLKDKHVNMIYKGIKTSDIEGHPEFSGKTIVLTGKLHQMTRNEASKWLASQGAKVTSSVTKNTDVVIAGEDAGSKLTKAQSLGIEIWTEQQFVDKQNELNS</sequence>
<name>DNLJ_STAAU</name>
<dbReference type="EC" id="6.5.1.2" evidence="1"/>
<dbReference type="EMBL" id="AF234833">
    <property type="protein sequence ID" value="AAK15020.1"/>
    <property type="molecule type" value="Genomic_DNA"/>
</dbReference>
<dbReference type="RefSeq" id="WP_000774565.1">
    <property type="nucleotide sequence ID" value="NZ_WWFR01000006.1"/>
</dbReference>
<dbReference type="PDB" id="3JSL">
    <property type="method" value="X-ray"/>
    <property type="resolution" value="1.80 A"/>
    <property type="chains" value="A/B=1-312"/>
</dbReference>
<dbReference type="PDB" id="3JSN">
    <property type="method" value="X-ray"/>
    <property type="resolution" value="1.90 A"/>
    <property type="chains" value="A=1-312"/>
</dbReference>
<dbReference type="PDB" id="4CC5">
    <property type="method" value="X-ray"/>
    <property type="resolution" value="1.88 A"/>
    <property type="chains" value="A=1-312"/>
</dbReference>
<dbReference type="PDB" id="4CC6">
    <property type="method" value="X-ray"/>
    <property type="resolution" value="2.01 A"/>
    <property type="chains" value="A=1-312"/>
</dbReference>
<dbReference type="PDB" id="5FPO">
    <property type="method" value="X-ray"/>
    <property type="resolution" value="1.83 A"/>
    <property type="chains" value="A=1-312"/>
</dbReference>
<dbReference type="PDB" id="5FPR">
    <property type="method" value="X-ray"/>
    <property type="resolution" value="2.00 A"/>
    <property type="chains" value="A=1-312"/>
</dbReference>
<dbReference type="PDBsum" id="3JSL"/>
<dbReference type="PDBsum" id="3JSN"/>
<dbReference type="PDBsum" id="4CC5"/>
<dbReference type="PDBsum" id="4CC6"/>
<dbReference type="PDBsum" id="5FPO"/>
<dbReference type="PDBsum" id="5FPR"/>
<dbReference type="SMR" id="Q9AIU7"/>
<dbReference type="BindingDB" id="Q9AIU7"/>
<dbReference type="ChEMBL" id="CHEMBL2163181"/>
<dbReference type="OMA" id="HDVEHEI"/>
<dbReference type="BRENDA" id="6.5.1.2">
    <property type="organism ID" value="3352"/>
</dbReference>
<dbReference type="EvolutionaryTrace" id="Q9AIU7"/>
<dbReference type="GO" id="GO:0005829">
    <property type="term" value="C:cytosol"/>
    <property type="evidence" value="ECO:0007669"/>
    <property type="project" value="TreeGrafter"/>
</dbReference>
<dbReference type="GO" id="GO:0003677">
    <property type="term" value="F:DNA binding"/>
    <property type="evidence" value="ECO:0007669"/>
    <property type="project" value="InterPro"/>
</dbReference>
<dbReference type="GO" id="GO:0003911">
    <property type="term" value="F:DNA ligase (NAD+) activity"/>
    <property type="evidence" value="ECO:0007669"/>
    <property type="project" value="UniProtKB-UniRule"/>
</dbReference>
<dbReference type="GO" id="GO:0046872">
    <property type="term" value="F:metal ion binding"/>
    <property type="evidence" value="ECO:0007669"/>
    <property type="project" value="UniProtKB-KW"/>
</dbReference>
<dbReference type="GO" id="GO:0006281">
    <property type="term" value="P:DNA repair"/>
    <property type="evidence" value="ECO:0007669"/>
    <property type="project" value="UniProtKB-KW"/>
</dbReference>
<dbReference type="GO" id="GO:0006260">
    <property type="term" value="P:DNA replication"/>
    <property type="evidence" value="ECO:0007669"/>
    <property type="project" value="UniProtKB-KW"/>
</dbReference>
<dbReference type="CDD" id="cd17748">
    <property type="entry name" value="BRCT_DNA_ligase_like"/>
    <property type="match status" value="1"/>
</dbReference>
<dbReference type="CDD" id="cd00114">
    <property type="entry name" value="LIGANc"/>
    <property type="match status" value="1"/>
</dbReference>
<dbReference type="FunFam" id="1.10.150.20:FF:000006">
    <property type="entry name" value="DNA ligase"/>
    <property type="match status" value="1"/>
</dbReference>
<dbReference type="FunFam" id="1.10.150.20:FF:000007">
    <property type="entry name" value="DNA ligase"/>
    <property type="match status" value="1"/>
</dbReference>
<dbReference type="FunFam" id="1.10.287.610:FF:000005">
    <property type="entry name" value="DNA ligase"/>
    <property type="match status" value="1"/>
</dbReference>
<dbReference type="FunFam" id="2.40.50.140:FF:000012">
    <property type="entry name" value="DNA ligase"/>
    <property type="match status" value="1"/>
</dbReference>
<dbReference type="FunFam" id="3.30.470.30:FF:000001">
    <property type="entry name" value="DNA ligase"/>
    <property type="match status" value="1"/>
</dbReference>
<dbReference type="FunFam" id="3.40.50.10190:FF:000045">
    <property type="entry name" value="DNA ligase"/>
    <property type="match status" value="1"/>
</dbReference>
<dbReference type="FunFam" id="6.20.10.30:FF:000002">
    <property type="entry name" value="DNA ligase"/>
    <property type="match status" value="1"/>
</dbReference>
<dbReference type="Gene3D" id="6.20.10.30">
    <property type="match status" value="1"/>
</dbReference>
<dbReference type="Gene3D" id="1.10.150.20">
    <property type="entry name" value="5' to 3' exonuclease, C-terminal subdomain"/>
    <property type="match status" value="2"/>
</dbReference>
<dbReference type="Gene3D" id="3.40.50.10190">
    <property type="entry name" value="BRCT domain"/>
    <property type="match status" value="1"/>
</dbReference>
<dbReference type="Gene3D" id="3.30.470.30">
    <property type="entry name" value="DNA ligase/mRNA capping enzyme"/>
    <property type="match status" value="1"/>
</dbReference>
<dbReference type="Gene3D" id="1.10.287.610">
    <property type="entry name" value="Helix hairpin bin"/>
    <property type="match status" value="1"/>
</dbReference>
<dbReference type="Gene3D" id="2.40.50.140">
    <property type="entry name" value="Nucleic acid-binding proteins"/>
    <property type="match status" value="1"/>
</dbReference>
<dbReference type="HAMAP" id="MF_01588">
    <property type="entry name" value="DNA_ligase_A"/>
    <property type="match status" value="1"/>
</dbReference>
<dbReference type="InterPro" id="IPR001357">
    <property type="entry name" value="BRCT_dom"/>
</dbReference>
<dbReference type="InterPro" id="IPR036420">
    <property type="entry name" value="BRCT_dom_sf"/>
</dbReference>
<dbReference type="InterPro" id="IPR041663">
    <property type="entry name" value="DisA/LigA_HHH"/>
</dbReference>
<dbReference type="InterPro" id="IPR001679">
    <property type="entry name" value="DNA_ligase"/>
</dbReference>
<dbReference type="InterPro" id="IPR018239">
    <property type="entry name" value="DNA_ligase_AS"/>
</dbReference>
<dbReference type="InterPro" id="IPR033136">
    <property type="entry name" value="DNA_ligase_CS"/>
</dbReference>
<dbReference type="InterPro" id="IPR013839">
    <property type="entry name" value="DNAligase_adenylation"/>
</dbReference>
<dbReference type="InterPro" id="IPR013840">
    <property type="entry name" value="DNAligase_N"/>
</dbReference>
<dbReference type="InterPro" id="IPR003583">
    <property type="entry name" value="Hlx-hairpin-Hlx_DNA-bd_motif"/>
</dbReference>
<dbReference type="InterPro" id="IPR012340">
    <property type="entry name" value="NA-bd_OB-fold"/>
</dbReference>
<dbReference type="InterPro" id="IPR004150">
    <property type="entry name" value="NAD_DNA_ligase_OB"/>
</dbReference>
<dbReference type="InterPro" id="IPR010994">
    <property type="entry name" value="RuvA_2-like"/>
</dbReference>
<dbReference type="InterPro" id="IPR004149">
    <property type="entry name" value="Znf_DNAligase_C4"/>
</dbReference>
<dbReference type="NCBIfam" id="TIGR00575">
    <property type="entry name" value="dnlj"/>
    <property type="match status" value="1"/>
</dbReference>
<dbReference type="NCBIfam" id="NF005932">
    <property type="entry name" value="PRK07956.1"/>
    <property type="match status" value="1"/>
</dbReference>
<dbReference type="PANTHER" id="PTHR23389">
    <property type="entry name" value="CHROMOSOME TRANSMISSION FIDELITY FACTOR 18"/>
    <property type="match status" value="1"/>
</dbReference>
<dbReference type="PANTHER" id="PTHR23389:SF9">
    <property type="entry name" value="DNA LIGASE"/>
    <property type="match status" value="1"/>
</dbReference>
<dbReference type="Pfam" id="PF00533">
    <property type="entry name" value="BRCT"/>
    <property type="match status" value="1"/>
</dbReference>
<dbReference type="Pfam" id="PF01653">
    <property type="entry name" value="DNA_ligase_aden"/>
    <property type="match status" value="1"/>
</dbReference>
<dbReference type="Pfam" id="PF03120">
    <property type="entry name" value="DNA_ligase_OB"/>
    <property type="match status" value="1"/>
</dbReference>
<dbReference type="Pfam" id="PF03119">
    <property type="entry name" value="DNA_ligase_ZBD"/>
    <property type="match status" value="1"/>
</dbReference>
<dbReference type="Pfam" id="PF12826">
    <property type="entry name" value="HHH_2"/>
    <property type="match status" value="1"/>
</dbReference>
<dbReference type="PIRSF" id="PIRSF001604">
    <property type="entry name" value="LigA"/>
    <property type="match status" value="1"/>
</dbReference>
<dbReference type="SMART" id="SM00292">
    <property type="entry name" value="BRCT"/>
    <property type="match status" value="1"/>
</dbReference>
<dbReference type="SMART" id="SM00278">
    <property type="entry name" value="HhH1"/>
    <property type="match status" value="3"/>
</dbReference>
<dbReference type="SMART" id="SM00532">
    <property type="entry name" value="LIGANc"/>
    <property type="match status" value="1"/>
</dbReference>
<dbReference type="SUPFAM" id="SSF52113">
    <property type="entry name" value="BRCT domain"/>
    <property type="match status" value="1"/>
</dbReference>
<dbReference type="SUPFAM" id="SSF56091">
    <property type="entry name" value="DNA ligase/mRNA capping enzyme, catalytic domain"/>
    <property type="match status" value="1"/>
</dbReference>
<dbReference type="SUPFAM" id="SSF50249">
    <property type="entry name" value="Nucleic acid-binding proteins"/>
    <property type="match status" value="1"/>
</dbReference>
<dbReference type="SUPFAM" id="SSF47781">
    <property type="entry name" value="RuvA domain 2-like"/>
    <property type="match status" value="1"/>
</dbReference>
<dbReference type="PROSITE" id="PS50172">
    <property type="entry name" value="BRCT"/>
    <property type="match status" value="1"/>
</dbReference>
<dbReference type="PROSITE" id="PS01055">
    <property type="entry name" value="DNA_LIGASE_N1"/>
    <property type="match status" value="1"/>
</dbReference>
<dbReference type="PROSITE" id="PS01056">
    <property type="entry name" value="DNA_LIGASE_N2"/>
    <property type="match status" value="1"/>
</dbReference>
<comment type="function">
    <text>DNA ligase that catalyzes the formation of phosphodiester linkages between 5'-phosphoryl and 3'-hydroxyl groups in double-stranded DNA using NAD as a coenzyme and as the energy source for the reaction. It is essential for DNA replication and repair of damaged DNA.</text>
</comment>
<comment type="catalytic activity">
    <reaction evidence="1">
        <text>NAD(+) + (deoxyribonucleotide)n-3'-hydroxyl + 5'-phospho-(deoxyribonucleotide)m = (deoxyribonucleotide)n+m + AMP + beta-nicotinamide D-nucleotide.</text>
        <dbReference type="EC" id="6.5.1.2"/>
    </reaction>
</comment>
<comment type="cofactor">
    <cofactor evidence="1">
        <name>Mg(2+)</name>
        <dbReference type="ChEBI" id="CHEBI:18420"/>
    </cofactor>
    <cofactor evidence="1">
        <name>Mn(2+)</name>
        <dbReference type="ChEBI" id="CHEBI:29035"/>
    </cofactor>
</comment>
<comment type="similarity">
    <text evidence="1">Belongs to the NAD-dependent DNA ligase family. LigA subfamily.</text>
</comment>
<evidence type="ECO:0000255" key="1">
    <source>
        <dbReference type="HAMAP-Rule" id="MF_01588"/>
    </source>
</evidence>
<evidence type="ECO:0007829" key="2">
    <source>
        <dbReference type="PDB" id="3JSL"/>
    </source>
</evidence>
<proteinExistence type="evidence at protein level"/>